<accession>B1MG21</accession>
<feature type="chain" id="PRO_1000196793" description="Bifunctional protein FolD">
    <location>
        <begin position="1"/>
        <end position="281"/>
    </location>
</feature>
<feature type="binding site" evidence="1">
    <location>
        <begin position="165"/>
        <end position="167"/>
    </location>
    <ligand>
        <name>NADP(+)</name>
        <dbReference type="ChEBI" id="CHEBI:58349"/>
    </ligand>
</feature>
<feature type="binding site" evidence="1">
    <location>
        <position position="192"/>
    </location>
    <ligand>
        <name>NADP(+)</name>
        <dbReference type="ChEBI" id="CHEBI:58349"/>
    </ligand>
</feature>
<feature type="binding site" evidence="1">
    <location>
        <position position="233"/>
    </location>
    <ligand>
        <name>NADP(+)</name>
        <dbReference type="ChEBI" id="CHEBI:58349"/>
    </ligand>
</feature>
<evidence type="ECO:0000255" key="1">
    <source>
        <dbReference type="HAMAP-Rule" id="MF_01576"/>
    </source>
</evidence>
<reference key="1">
    <citation type="journal article" date="2009" name="PLoS ONE">
        <title>Non mycobacterial virulence genes in the genome of the emerging pathogen Mycobacterium abscessus.</title>
        <authorList>
            <person name="Ripoll F."/>
            <person name="Pasek S."/>
            <person name="Schenowitz C."/>
            <person name="Dossat C."/>
            <person name="Barbe V."/>
            <person name="Rottman M."/>
            <person name="Macheras E."/>
            <person name="Heym B."/>
            <person name="Herrmann J.L."/>
            <person name="Daffe M."/>
            <person name="Brosch R."/>
            <person name="Risler J.L."/>
            <person name="Gaillard J.L."/>
        </authorList>
    </citation>
    <scope>NUCLEOTIDE SEQUENCE [LARGE SCALE GENOMIC DNA]</scope>
    <source>
        <strain>ATCC 19977 / DSM 44196 / CCUG 20993 / CIP 104536 / JCM 13569 / NCTC 13031 / TMC 1543 / L948</strain>
    </source>
</reference>
<dbReference type="EC" id="1.5.1.5" evidence="1"/>
<dbReference type="EC" id="3.5.4.9" evidence="1"/>
<dbReference type="EMBL" id="CU458896">
    <property type="protein sequence ID" value="CAM63766.1"/>
    <property type="molecule type" value="Genomic_DNA"/>
</dbReference>
<dbReference type="RefSeq" id="WP_005056107.1">
    <property type="nucleotide sequence ID" value="NZ_MLCG01000001.1"/>
</dbReference>
<dbReference type="SMR" id="B1MG21"/>
<dbReference type="GeneID" id="93380631"/>
<dbReference type="KEGG" id="mab:MAB_3692c"/>
<dbReference type="UniPathway" id="UPA00193"/>
<dbReference type="Proteomes" id="UP000007137">
    <property type="component" value="Chromosome"/>
</dbReference>
<dbReference type="GO" id="GO:0005829">
    <property type="term" value="C:cytosol"/>
    <property type="evidence" value="ECO:0007669"/>
    <property type="project" value="TreeGrafter"/>
</dbReference>
<dbReference type="GO" id="GO:0004477">
    <property type="term" value="F:methenyltetrahydrofolate cyclohydrolase activity"/>
    <property type="evidence" value="ECO:0007669"/>
    <property type="project" value="UniProtKB-UniRule"/>
</dbReference>
<dbReference type="GO" id="GO:0004488">
    <property type="term" value="F:methylenetetrahydrofolate dehydrogenase (NADP+) activity"/>
    <property type="evidence" value="ECO:0007669"/>
    <property type="project" value="UniProtKB-UniRule"/>
</dbReference>
<dbReference type="GO" id="GO:0000105">
    <property type="term" value="P:L-histidine biosynthetic process"/>
    <property type="evidence" value="ECO:0007669"/>
    <property type="project" value="UniProtKB-KW"/>
</dbReference>
<dbReference type="GO" id="GO:0009086">
    <property type="term" value="P:methionine biosynthetic process"/>
    <property type="evidence" value="ECO:0007669"/>
    <property type="project" value="UniProtKB-KW"/>
</dbReference>
<dbReference type="GO" id="GO:0006164">
    <property type="term" value="P:purine nucleotide biosynthetic process"/>
    <property type="evidence" value="ECO:0007669"/>
    <property type="project" value="UniProtKB-KW"/>
</dbReference>
<dbReference type="GO" id="GO:0035999">
    <property type="term" value="P:tetrahydrofolate interconversion"/>
    <property type="evidence" value="ECO:0007669"/>
    <property type="project" value="UniProtKB-UniRule"/>
</dbReference>
<dbReference type="CDD" id="cd01080">
    <property type="entry name" value="NAD_bind_m-THF_DH_Cyclohyd"/>
    <property type="match status" value="1"/>
</dbReference>
<dbReference type="FunFam" id="3.40.50.720:FF:000094">
    <property type="entry name" value="Bifunctional protein FolD"/>
    <property type="match status" value="1"/>
</dbReference>
<dbReference type="FunFam" id="3.40.50.10860:FF:000005">
    <property type="entry name" value="C-1-tetrahydrofolate synthase, cytoplasmic, putative"/>
    <property type="match status" value="1"/>
</dbReference>
<dbReference type="Gene3D" id="3.40.50.10860">
    <property type="entry name" value="Leucine Dehydrogenase, chain A, domain 1"/>
    <property type="match status" value="1"/>
</dbReference>
<dbReference type="Gene3D" id="3.40.50.720">
    <property type="entry name" value="NAD(P)-binding Rossmann-like Domain"/>
    <property type="match status" value="1"/>
</dbReference>
<dbReference type="HAMAP" id="MF_01576">
    <property type="entry name" value="THF_DHG_CYH"/>
    <property type="match status" value="1"/>
</dbReference>
<dbReference type="InterPro" id="IPR046346">
    <property type="entry name" value="Aminoacid_DH-like_N_sf"/>
</dbReference>
<dbReference type="InterPro" id="IPR036291">
    <property type="entry name" value="NAD(P)-bd_dom_sf"/>
</dbReference>
<dbReference type="InterPro" id="IPR000672">
    <property type="entry name" value="THF_DH/CycHdrlase"/>
</dbReference>
<dbReference type="InterPro" id="IPR020630">
    <property type="entry name" value="THF_DH/CycHdrlase_cat_dom"/>
</dbReference>
<dbReference type="InterPro" id="IPR020631">
    <property type="entry name" value="THF_DH/CycHdrlase_NAD-bd_dom"/>
</dbReference>
<dbReference type="NCBIfam" id="NF010789">
    <property type="entry name" value="PRK14193.1"/>
    <property type="match status" value="1"/>
</dbReference>
<dbReference type="PANTHER" id="PTHR48099:SF5">
    <property type="entry name" value="C-1-TETRAHYDROFOLATE SYNTHASE, CYTOPLASMIC"/>
    <property type="match status" value="1"/>
</dbReference>
<dbReference type="PANTHER" id="PTHR48099">
    <property type="entry name" value="C-1-TETRAHYDROFOLATE SYNTHASE, CYTOPLASMIC-RELATED"/>
    <property type="match status" value="1"/>
</dbReference>
<dbReference type="Pfam" id="PF00763">
    <property type="entry name" value="THF_DHG_CYH"/>
    <property type="match status" value="1"/>
</dbReference>
<dbReference type="Pfam" id="PF02882">
    <property type="entry name" value="THF_DHG_CYH_C"/>
    <property type="match status" value="1"/>
</dbReference>
<dbReference type="PRINTS" id="PR00085">
    <property type="entry name" value="THFDHDRGNASE"/>
</dbReference>
<dbReference type="SUPFAM" id="SSF53223">
    <property type="entry name" value="Aminoacid dehydrogenase-like, N-terminal domain"/>
    <property type="match status" value="1"/>
</dbReference>
<dbReference type="SUPFAM" id="SSF51735">
    <property type="entry name" value="NAD(P)-binding Rossmann-fold domains"/>
    <property type="match status" value="1"/>
</dbReference>
<sequence>MTATRLDGKATRDEIFVELATRAAALKAAGKTPGLGTILVGDDPGSHAYVRGKHADCAKVGLNSIRRDLPADIDQATLCATIDELNANPDCTGYIVQLPLPKHLDENEALERIDPDKDADGLHPTNLGRLVLGKEAPLPCTPRGIVYLLRRYDVKLDGAHVVVIGRGVTVGRPLGLLLTRRSENATVTLCHTGTRDLAALTRQADIIVAAAGVPHMVTADMVKPGAAVVDVGVSRVDDKLTGDVAEDVWDVAGYVSPNPGGVGPLTRAFLLTNVIERAERS</sequence>
<comment type="function">
    <text evidence="1">Catalyzes the oxidation of 5,10-methylenetetrahydrofolate to 5,10-methenyltetrahydrofolate and then the hydrolysis of 5,10-methenyltetrahydrofolate to 10-formyltetrahydrofolate.</text>
</comment>
<comment type="catalytic activity">
    <reaction evidence="1">
        <text>(6R)-5,10-methylene-5,6,7,8-tetrahydrofolate + NADP(+) = (6R)-5,10-methenyltetrahydrofolate + NADPH</text>
        <dbReference type="Rhea" id="RHEA:22812"/>
        <dbReference type="ChEBI" id="CHEBI:15636"/>
        <dbReference type="ChEBI" id="CHEBI:57455"/>
        <dbReference type="ChEBI" id="CHEBI:57783"/>
        <dbReference type="ChEBI" id="CHEBI:58349"/>
        <dbReference type="EC" id="1.5.1.5"/>
    </reaction>
</comment>
<comment type="catalytic activity">
    <reaction evidence="1">
        <text>(6R)-5,10-methenyltetrahydrofolate + H2O = (6R)-10-formyltetrahydrofolate + H(+)</text>
        <dbReference type="Rhea" id="RHEA:23700"/>
        <dbReference type="ChEBI" id="CHEBI:15377"/>
        <dbReference type="ChEBI" id="CHEBI:15378"/>
        <dbReference type="ChEBI" id="CHEBI:57455"/>
        <dbReference type="ChEBI" id="CHEBI:195366"/>
        <dbReference type="EC" id="3.5.4.9"/>
    </reaction>
</comment>
<comment type="pathway">
    <text evidence="1">One-carbon metabolism; tetrahydrofolate interconversion.</text>
</comment>
<comment type="subunit">
    <text evidence="1">Homodimer.</text>
</comment>
<comment type="similarity">
    <text evidence="1">Belongs to the tetrahydrofolate dehydrogenase/cyclohydrolase family.</text>
</comment>
<keyword id="KW-0028">Amino-acid biosynthesis</keyword>
<keyword id="KW-0368">Histidine biosynthesis</keyword>
<keyword id="KW-0378">Hydrolase</keyword>
<keyword id="KW-0486">Methionine biosynthesis</keyword>
<keyword id="KW-0511">Multifunctional enzyme</keyword>
<keyword id="KW-0521">NADP</keyword>
<keyword id="KW-0554">One-carbon metabolism</keyword>
<keyword id="KW-0560">Oxidoreductase</keyword>
<keyword id="KW-0658">Purine biosynthesis</keyword>
<keyword id="KW-1185">Reference proteome</keyword>
<name>FOLD_MYCA9</name>
<organism>
    <name type="scientific">Mycobacteroides abscessus (strain ATCC 19977 / DSM 44196 / CCUG 20993 / CIP 104536 / JCM 13569 / NCTC 13031 / TMC 1543 / L948)</name>
    <name type="common">Mycobacterium abscessus</name>
    <dbReference type="NCBI Taxonomy" id="561007"/>
    <lineage>
        <taxon>Bacteria</taxon>
        <taxon>Bacillati</taxon>
        <taxon>Actinomycetota</taxon>
        <taxon>Actinomycetes</taxon>
        <taxon>Mycobacteriales</taxon>
        <taxon>Mycobacteriaceae</taxon>
        <taxon>Mycobacteroides</taxon>
        <taxon>Mycobacteroides abscessus</taxon>
    </lineage>
</organism>
<protein>
    <recommendedName>
        <fullName evidence="1">Bifunctional protein FolD</fullName>
    </recommendedName>
    <domain>
        <recommendedName>
            <fullName evidence="1">Methylenetetrahydrofolate dehydrogenase</fullName>
            <ecNumber evidence="1">1.5.1.5</ecNumber>
        </recommendedName>
    </domain>
    <domain>
        <recommendedName>
            <fullName evidence="1">Methenyltetrahydrofolate cyclohydrolase</fullName>
            <ecNumber evidence="1">3.5.4.9</ecNumber>
        </recommendedName>
    </domain>
</protein>
<proteinExistence type="inferred from homology"/>
<gene>
    <name evidence="1" type="primary">folD</name>
    <name type="ordered locus">MAB_3692c</name>
</gene>